<protein>
    <recommendedName>
        <fullName evidence="1">NADH-quinone oxidoreductase subunit I 1</fullName>
        <ecNumber evidence="1">7.1.1.-</ecNumber>
    </recommendedName>
    <alternativeName>
        <fullName evidence="1">NADH dehydrogenase I subunit I 1</fullName>
    </alternativeName>
    <alternativeName>
        <fullName evidence="1">NDH-1 subunit I 1</fullName>
    </alternativeName>
</protein>
<reference key="1">
    <citation type="journal article" date="2006" name="Proc. Natl. Acad. Sci. U.S.A.">
        <title>The partitioned Rhizobium etli genome: genetic and metabolic redundancy in seven interacting replicons.</title>
        <authorList>
            <person name="Gonzalez V."/>
            <person name="Santamaria R.I."/>
            <person name="Bustos P."/>
            <person name="Hernandez-Gonzalez I."/>
            <person name="Medrano-Soto A."/>
            <person name="Moreno-Hagelsieb G."/>
            <person name="Janga S.C."/>
            <person name="Ramirez M.A."/>
            <person name="Jimenez-Jacinto V."/>
            <person name="Collado-Vides J."/>
            <person name="Davila G."/>
        </authorList>
    </citation>
    <scope>NUCLEOTIDE SEQUENCE [LARGE SCALE GENOMIC DNA]</scope>
    <source>
        <strain>ATCC 51251 / DSM 11541 / JCM 21823 / NBRC 15573 / CFN 42</strain>
    </source>
</reference>
<organism>
    <name type="scientific">Rhizobium etli (strain ATCC 51251 / DSM 11541 / JCM 21823 / NBRC 15573 / CFN 42)</name>
    <dbReference type="NCBI Taxonomy" id="347834"/>
    <lineage>
        <taxon>Bacteria</taxon>
        <taxon>Pseudomonadati</taxon>
        <taxon>Pseudomonadota</taxon>
        <taxon>Alphaproteobacteria</taxon>
        <taxon>Hyphomicrobiales</taxon>
        <taxon>Rhizobiaceae</taxon>
        <taxon>Rhizobium/Agrobacterium group</taxon>
        <taxon>Rhizobium</taxon>
    </lineage>
</organism>
<proteinExistence type="inferred from homology"/>
<gene>
    <name evidence="1" type="primary">nuoI1</name>
    <name type="ordered locus">RHE_CH01613</name>
</gene>
<sequence length="163" mass="18866">MASLSSSINSLFLKEFFGAFFLSMRYFFRQKATINYPFEKGPVSPRFRGEHALRRYPNGEERCIACKLCEAICPAQAITIEAGPRRNDGTRRTVRYDIDMVKCIYCGFCQEACPVDAIVEGPNFEFATETREELYFDKARLLDNGDRWEREIARNIAIDSPYR</sequence>
<keyword id="KW-0004">4Fe-4S</keyword>
<keyword id="KW-0997">Cell inner membrane</keyword>
<keyword id="KW-1003">Cell membrane</keyword>
<keyword id="KW-0408">Iron</keyword>
<keyword id="KW-0411">Iron-sulfur</keyword>
<keyword id="KW-0472">Membrane</keyword>
<keyword id="KW-0479">Metal-binding</keyword>
<keyword id="KW-0520">NAD</keyword>
<keyword id="KW-0874">Quinone</keyword>
<keyword id="KW-1185">Reference proteome</keyword>
<keyword id="KW-0677">Repeat</keyword>
<keyword id="KW-1278">Translocase</keyword>
<keyword id="KW-0830">Ubiquinone</keyword>
<comment type="function">
    <text evidence="1">NDH-1 shuttles electrons from NADH, via FMN and iron-sulfur (Fe-S) centers, to quinones in the respiratory chain. The immediate electron acceptor for the enzyme in this species is believed to be ubiquinone. Couples the redox reaction to proton translocation (for every two electrons transferred, four hydrogen ions are translocated across the cytoplasmic membrane), and thus conserves the redox energy in a proton gradient.</text>
</comment>
<comment type="catalytic activity">
    <reaction evidence="1">
        <text>a quinone + NADH + 5 H(+)(in) = a quinol + NAD(+) + 4 H(+)(out)</text>
        <dbReference type="Rhea" id="RHEA:57888"/>
        <dbReference type="ChEBI" id="CHEBI:15378"/>
        <dbReference type="ChEBI" id="CHEBI:24646"/>
        <dbReference type="ChEBI" id="CHEBI:57540"/>
        <dbReference type="ChEBI" id="CHEBI:57945"/>
        <dbReference type="ChEBI" id="CHEBI:132124"/>
    </reaction>
</comment>
<comment type="cofactor">
    <cofactor evidence="1">
        <name>[4Fe-4S] cluster</name>
        <dbReference type="ChEBI" id="CHEBI:49883"/>
    </cofactor>
    <text evidence="1">Binds 2 [4Fe-4S] clusters per subunit.</text>
</comment>
<comment type="subunit">
    <text evidence="1">NDH-1 is composed of 14 different subunits. Subunits NuoA, H, J, K, L, M, N constitute the membrane sector of the complex.</text>
</comment>
<comment type="subcellular location">
    <subcellularLocation>
        <location evidence="1">Cell inner membrane</location>
        <topology evidence="1">Peripheral membrane protein</topology>
    </subcellularLocation>
</comment>
<comment type="similarity">
    <text evidence="1">Belongs to the complex I 23 kDa subunit family.</text>
</comment>
<dbReference type="EC" id="7.1.1.-" evidence="1"/>
<dbReference type="EMBL" id="CP000133">
    <property type="protein sequence ID" value="ABC90412.1"/>
    <property type="molecule type" value="Genomic_DNA"/>
</dbReference>
<dbReference type="SMR" id="Q2K9S4"/>
<dbReference type="KEGG" id="ret:RHE_CH01613"/>
<dbReference type="eggNOG" id="COG1143">
    <property type="taxonomic scope" value="Bacteria"/>
</dbReference>
<dbReference type="HOGENOM" id="CLU_067218_5_1_5"/>
<dbReference type="OrthoDB" id="9808559at2"/>
<dbReference type="Proteomes" id="UP000001936">
    <property type="component" value="Chromosome"/>
</dbReference>
<dbReference type="GO" id="GO:0005886">
    <property type="term" value="C:plasma membrane"/>
    <property type="evidence" value="ECO:0007669"/>
    <property type="project" value="UniProtKB-SubCell"/>
</dbReference>
<dbReference type="GO" id="GO:0051539">
    <property type="term" value="F:4 iron, 4 sulfur cluster binding"/>
    <property type="evidence" value="ECO:0007669"/>
    <property type="project" value="UniProtKB-KW"/>
</dbReference>
<dbReference type="GO" id="GO:0005506">
    <property type="term" value="F:iron ion binding"/>
    <property type="evidence" value="ECO:0007669"/>
    <property type="project" value="UniProtKB-UniRule"/>
</dbReference>
<dbReference type="GO" id="GO:0050136">
    <property type="term" value="F:NADH:ubiquinone reductase (non-electrogenic) activity"/>
    <property type="evidence" value="ECO:0007669"/>
    <property type="project" value="UniProtKB-UniRule"/>
</dbReference>
<dbReference type="GO" id="GO:0048038">
    <property type="term" value="F:quinone binding"/>
    <property type="evidence" value="ECO:0007669"/>
    <property type="project" value="UniProtKB-KW"/>
</dbReference>
<dbReference type="GO" id="GO:0009060">
    <property type="term" value="P:aerobic respiration"/>
    <property type="evidence" value="ECO:0007669"/>
    <property type="project" value="TreeGrafter"/>
</dbReference>
<dbReference type="FunFam" id="3.30.70.3270:FF:000001">
    <property type="entry name" value="NADH-quinone oxidoreductase subunit I 1"/>
    <property type="match status" value="1"/>
</dbReference>
<dbReference type="Gene3D" id="3.30.70.3270">
    <property type="match status" value="1"/>
</dbReference>
<dbReference type="HAMAP" id="MF_01351">
    <property type="entry name" value="NDH1_NuoI"/>
    <property type="match status" value="1"/>
</dbReference>
<dbReference type="InterPro" id="IPR017896">
    <property type="entry name" value="4Fe4S_Fe-S-bd"/>
</dbReference>
<dbReference type="InterPro" id="IPR017900">
    <property type="entry name" value="4Fe4S_Fe_S_CS"/>
</dbReference>
<dbReference type="InterPro" id="IPR010226">
    <property type="entry name" value="NADH_quinone_OxRdtase_chainI"/>
</dbReference>
<dbReference type="NCBIfam" id="TIGR01971">
    <property type="entry name" value="NuoI"/>
    <property type="match status" value="1"/>
</dbReference>
<dbReference type="NCBIfam" id="NF004538">
    <property type="entry name" value="PRK05888.1-4"/>
    <property type="match status" value="1"/>
</dbReference>
<dbReference type="NCBIfam" id="NF004539">
    <property type="entry name" value="PRK05888.1-5"/>
    <property type="match status" value="1"/>
</dbReference>
<dbReference type="PANTHER" id="PTHR10849:SF20">
    <property type="entry name" value="NADH DEHYDROGENASE [UBIQUINONE] IRON-SULFUR PROTEIN 8, MITOCHONDRIAL"/>
    <property type="match status" value="1"/>
</dbReference>
<dbReference type="PANTHER" id="PTHR10849">
    <property type="entry name" value="NADH DEHYDROGENASE UBIQUINONE IRON-SULFUR PROTEIN 8, MITOCHONDRIAL"/>
    <property type="match status" value="1"/>
</dbReference>
<dbReference type="Pfam" id="PF12838">
    <property type="entry name" value="Fer4_7"/>
    <property type="match status" value="1"/>
</dbReference>
<dbReference type="SUPFAM" id="SSF54862">
    <property type="entry name" value="4Fe-4S ferredoxins"/>
    <property type="match status" value="1"/>
</dbReference>
<dbReference type="PROSITE" id="PS00198">
    <property type="entry name" value="4FE4S_FER_1"/>
    <property type="match status" value="2"/>
</dbReference>
<dbReference type="PROSITE" id="PS51379">
    <property type="entry name" value="4FE4S_FER_2"/>
    <property type="match status" value="2"/>
</dbReference>
<evidence type="ECO:0000255" key="1">
    <source>
        <dbReference type="HAMAP-Rule" id="MF_01351"/>
    </source>
</evidence>
<accession>Q2K9S4</accession>
<name>NUOI1_RHIEC</name>
<feature type="chain" id="PRO_0000250928" description="NADH-quinone oxidoreductase subunit I 1">
    <location>
        <begin position="1"/>
        <end position="163"/>
    </location>
</feature>
<feature type="domain" description="4Fe-4S ferredoxin-type 1" evidence="1">
    <location>
        <begin position="53"/>
        <end position="83"/>
    </location>
</feature>
<feature type="domain" description="4Fe-4S ferredoxin-type 2" evidence="1">
    <location>
        <begin position="94"/>
        <end position="123"/>
    </location>
</feature>
<feature type="binding site" evidence="1">
    <location>
        <position position="63"/>
    </location>
    <ligand>
        <name>[4Fe-4S] cluster</name>
        <dbReference type="ChEBI" id="CHEBI:49883"/>
        <label>1</label>
    </ligand>
</feature>
<feature type="binding site" evidence="1">
    <location>
        <position position="66"/>
    </location>
    <ligand>
        <name>[4Fe-4S] cluster</name>
        <dbReference type="ChEBI" id="CHEBI:49883"/>
        <label>1</label>
    </ligand>
</feature>
<feature type="binding site" evidence="1">
    <location>
        <position position="69"/>
    </location>
    <ligand>
        <name>[4Fe-4S] cluster</name>
        <dbReference type="ChEBI" id="CHEBI:49883"/>
        <label>1</label>
    </ligand>
</feature>
<feature type="binding site" evidence="1">
    <location>
        <position position="73"/>
    </location>
    <ligand>
        <name>[4Fe-4S] cluster</name>
        <dbReference type="ChEBI" id="CHEBI:49883"/>
        <label>2</label>
    </ligand>
</feature>
<feature type="binding site" evidence="1">
    <location>
        <position position="103"/>
    </location>
    <ligand>
        <name>[4Fe-4S] cluster</name>
        <dbReference type="ChEBI" id="CHEBI:49883"/>
        <label>2</label>
    </ligand>
</feature>
<feature type="binding site" evidence="1">
    <location>
        <position position="106"/>
    </location>
    <ligand>
        <name>[4Fe-4S] cluster</name>
        <dbReference type="ChEBI" id="CHEBI:49883"/>
        <label>2</label>
    </ligand>
</feature>
<feature type="binding site" evidence="1">
    <location>
        <position position="109"/>
    </location>
    <ligand>
        <name>[4Fe-4S] cluster</name>
        <dbReference type="ChEBI" id="CHEBI:49883"/>
        <label>2</label>
    </ligand>
</feature>
<feature type="binding site" evidence="1">
    <location>
        <position position="113"/>
    </location>
    <ligand>
        <name>[4Fe-4S] cluster</name>
        <dbReference type="ChEBI" id="CHEBI:49883"/>
        <label>1</label>
    </ligand>
</feature>